<keyword id="KW-0007">Acetylation</keyword>
<keyword id="KW-0051">Antiviral defense</keyword>
<keyword id="KW-0963">Cytoplasm</keyword>
<keyword id="KW-0240">DNA-directed RNA polymerase</keyword>
<keyword id="KW-0391">Immunity</keyword>
<keyword id="KW-0399">Innate immunity</keyword>
<keyword id="KW-0460">Magnesium</keyword>
<keyword id="KW-0479">Metal-binding</keyword>
<keyword id="KW-0548">Nucleotidyltransferase</keyword>
<keyword id="KW-0539">Nucleus</keyword>
<keyword id="KW-1185">Reference proteome</keyword>
<keyword id="KW-0804">Transcription</keyword>
<keyword id="KW-0808">Transferase</keyword>
<keyword id="KW-0862">Zinc</keyword>
<feature type="chain" id="PRO_0000330752" description="DNA-directed RNA polymerase III subunit RPC1">
    <location>
        <begin position="1"/>
        <end position="1390"/>
    </location>
</feature>
<feature type="region of interest" description="Bridging helix" evidence="1">
    <location>
        <begin position="844"/>
        <end position="856"/>
    </location>
</feature>
<feature type="binding site" evidence="2">
    <location>
        <position position="69"/>
    </location>
    <ligand>
        <name>Zn(2+)</name>
        <dbReference type="ChEBI" id="CHEBI:29105"/>
        <label>1</label>
    </ligand>
</feature>
<feature type="binding site" evidence="2">
    <location>
        <position position="72"/>
    </location>
    <ligand>
        <name>Zn(2+)</name>
        <dbReference type="ChEBI" id="CHEBI:29105"/>
        <label>1</label>
    </ligand>
</feature>
<feature type="binding site" evidence="2">
    <location>
        <position position="79"/>
    </location>
    <ligand>
        <name>Zn(2+)</name>
        <dbReference type="ChEBI" id="CHEBI:29105"/>
        <label>1</label>
    </ligand>
</feature>
<feature type="binding site" evidence="2">
    <location>
        <position position="82"/>
    </location>
    <ligand>
        <name>Zn(2+)</name>
        <dbReference type="ChEBI" id="CHEBI:29105"/>
        <label>1</label>
    </ligand>
</feature>
<feature type="binding site" evidence="2">
    <location>
        <position position="109"/>
    </location>
    <ligand>
        <name>Zn(2+)</name>
        <dbReference type="ChEBI" id="CHEBI:29105"/>
        <label>2</label>
    </ligand>
</feature>
<feature type="binding site" evidence="2">
    <location>
        <position position="112"/>
    </location>
    <ligand>
        <name>Zn(2+)</name>
        <dbReference type="ChEBI" id="CHEBI:29105"/>
        <label>2</label>
    </ligand>
</feature>
<feature type="binding site" evidence="2">
    <location>
        <position position="144"/>
    </location>
    <ligand>
        <name>DNA</name>
        <dbReference type="ChEBI" id="CHEBI:16991"/>
        <label>nontemplate strand</label>
    </ligand>
</feature>
<feature type="binding site" evidence="2">
    <location>
        <position position="156"/>
    </location>
    <ligand>
        <name>Zn(2+)</name>
        <dbReference type="ChEBI" id="CHEBI:29105"/>
        <label>2</label>
    </ligand>
</feature>
<feature type="binding site" evidence="2">
    <location>
        <position position="159"/>
    </location>
    <ligand>
        <name>Zn(2+)</name>
        <dbReference type="ChEBI" id="CHEBI:29105"/>
        <label>2</label>
    </ligand>
</feature>
<feature type="binding site" evidence="2">
    <location>
        <position position="167"/>
    </location>
    <ligand>
        <name>DNA</name>
        <dbReference type="ChEBI" id="CHEBI:16991"/>
        <label>nontemplate strand</label>
    </ligand>
</feature>
<feature type="binding site" evidence="2">
    <location>
        <position position="326"/>
    </location>
    <ligand>
        <name>DNA</name>
        <dbReference type="ChEBI" id="CHEBI:16991"/>
        <label>template strand</label>
    </ligand>
</feature>
<feature type="binding site" evidence="2">
    <location>
        <position position="348"/>
    </location>
    <ligand>
        <name>DNA</name>
        <dbReference type="ChEBI" id="CHEBI:16991"/>
        <label>template strand</label>
    </ligand>
</feature>
<feature type="binding site" evidence="2">
    <location>
        <position position="353"/>
    </location>
    <ligand>
        <name>DNA</name>
        <dbReference type="ChEBI" id="CHEBI:16991"/>
        <label>template strand</label>
    </ligand>
</feature>
<feature type="binding site" evidence="2">
    <location>
        <position position="360"/>
    </location>
    <ligand>
        <name>DNA</name>
        <dbReference type="ChEBI" id="CHEBI:16991"/>
        <label>template strand</label>
    </ligand>
</feature>
<feature type="binding site" evidence="2">
    <location>
        <position position="366"/>
    </location>
    <ligand>
        <name>DNA</name>
        <dbReference type="ChEBI" id="CHEBI:16991"/>
        <label>template strand</label>
    </ligand>
</feature>
<feature type="binding site" evidence="2">
    <location>
        <position position="464"/>
    </location>
    <ligand>
        <name>RNA</name>
        <dbReference type="ChEBI" id="CHEBI:33697"/>
    </ligand>
</feature>
<feature type="binding site" evidence="2">
    <location>
        <position position="499"/>
    </location>
    <ligand>
        <name>Mg(2+)</name>
        <dbReference type="ChEBI" id="CHEBI:18420"/>
        <label>1</label>
        <note>catalytic</note>
    </ligand>
</feature>
<feature type="binding site" evidence="4">
    <location>
        <position position="499"/>
    </location>
    <ligand>
        <name>Mg(2+)</name>
        <dbReference type="ChEBI" id="CHEBI:18420"/>
        <label>2</label>
        <note>ligand shared with POLR3B/RPC2</note>
    </ligand>
</feature>
<feature type="binding site" evidence="2">
    <location>
        <position position="501"/>
    </location>
    <ligand>
        <name>Mg(2+)</name>
        <dbReference type="ChEBI" id="CHEBI:18420"/>
        <label>1</label>
        <note>catalytic</note>
    </ligand>
</feature>
<feature type="binding site" evidence="3">
    <location>
        <position position="501"/>
    </location>
    <ligand>
        <name>Mg(2+)</name>
        <dbReference type="ChEBI" id="CHEBI:18420"/>
        <label>2</label>
        <note>ligand shared with POLR3B/RPC2</note>
    </ligand>
</feature>
<feature type="binding site" evidence="2">
    <location>
        <position position="503"/>
    </location>
    <ligand>
        <name>Mg(2+)</name>
        <dbReference type="ChEBI" id="CHEBI:18420"/>
        <label>1</label>
        <note>catalytic</note>
    </ligand>
</feature>
<feature type="binding site" evidence="2">
    <location>
        <position position="503"/>
    </location>
    <ligand>
        <name>RNA</name>
        <dbReference type="ChEBI" id="CHEBI:33697"/>
    </ligand>
</feature>
<feature type="binding site" evidence="2">
    <location>
        <position position="1159"/>
    </location>
    <ligand>
        <name>DNA</name>
        <dbReference type="ChEBI" id="CHEBI:16991"/>
        <label>nontemplate strand</label>
    </ligand>
</feature>
<feature type="binding site" evidence="2">
    <location>
        <position position="1305"/>
    </location>
    <ligand>
        <name>DNA</name>
        <dbReference type="ChEBI" id="CHEBI:16991"/>
        <label>template strand</label>
    </ligand>
</feature>
<feature type="binding site" evidence="2">
    <location>
        <position position="1323"/>
    </location>
    <ligand>
        <name>DNA</name>
        <dbReference type="ChEBI" id="CHEBI:16991"/>
        <label>template strand</label>
    </ligand>
</feature>
<feature type="modified residue" description="N6-acetyllysine" evidence="2">
    <location>
        <position position="445"/>
    </location>
</feature>
<organism>
    <name type="scientific">Bos taurus</name>
    <name type="common">Bovine</name>
    <dbReference type="NCBI Taxonomy" id="9913"/>
    <lineage>
        <taxon>Eukaryota</taxon>
        <taxon>Metazoa</taxon>
        <taxon>Chordata</taxon>
        <taxon>Craniata</taxon>
        <taxon>Vertebrata</taxon>
        <taxon>Euteleostomi</taxon>
        <taxon>Mammalia</taxon>
        <taxon>Eutheria</taxon>
        <taxon>Laurasiatheria</taxon>
        <taxon>Artiodactyla</taxon>
        <taxon>Ruminantia</taxon>
        <taxon>Pecora</taxon>
        <taxon>Bovidae</taxon>
        <taxon>Bovinae</taxon>
        <taxon>Bos</taxon>
    </lineage>
</organism>
<comment type="function">
    <text evidence="1 2">Catalytic core component of RNA polymerase III (Pol III), a DNA-dependent RNA polymerase which synthesizes small non-coding RNAs using the four ribonucleoside triphosphates as substrates. Synthesizes 5S rRNA, snRNAs, tRNAs and miRNAs from at least 500 distinct genomic loci (By similarity). Pol III-mediated transcription cycle proceeds through transcription initiation, transcription elongation and transcription termination stages. During transcription initiation, Pol III is recruited to DNA promoters type I, II or III with the help of general transcription factors and other specific initiation factors. Once the polymerase has escaped from the promoter it enters the elongation phase during which RNA is actively polymerized, based on complementarity with the template DNA strand. Transcription termination involves the release of the RNA transcript and polymerase from the DNA (By similarity). Forms Pol III active center together with the second largest subunit POLR3B/RPC2. Appends one nucleotide at a time to the 3' end of the nascent RNA, with POLR3A/RPC1 contributing a Mg(2+)-coordinating DxDGD motif, and POLR3B/RPC2 participating in the coordination of a second Mg(2+) ion and providing lysine residues believed to facilitate Watson-Crick base pairing between the incoming nucleotide and template base. Typically, Mg(2+) ions direct a 5' nucleoside triphosphate to form a phosphodiester bond with the 3' hydroxyl of the preceding nucleotide of the nascent RNA, with the elimination of pyrophosphate (By similarity). Pol III plays a key role in sensing and limiting infection by intracellular bacteria and DNA viruses. Acts as a nuclear and cytosolic DNA sensor involved in innate immune response. Can sense non-self dsDNA that serves as template for transcription into dsRNA. The non-self RNA polymerase III transcripts, such as Epstein-Barr virus-encoded RNAs (EBERs) induce type I interferon and NF-kappa-B through the RIG-I pathway (By similarity).</text>
</comment>
<comment type="catalytic activity">
    <reaction evidence="2">
        <text>RNA(n) + a ribonucleoside 5'-triphosphate = RNA(n+1) + diphosphate</text>
        <dbReference type="Rhea" id="RHEA:21248"/>
        <dbReference type="Rhea" id="RHEA-COMP:14527"/>
        <dbReference type="Rhea" id="RHEA-COMP:17342"/>
        <dbReference type="ChEBI" id="CHEBI:33019"/>
        <dbReference type="ChEBI" id="CHEBI:61557"/>
        <dbReference type="ChEBI" id="CHEBI:140395"/>
        <dbReference type="EC" id="2.7.7.6"/>
    </reaction>
    <physiologicalReaction direction="left-to-right" evidence="2">
        <dbReference type="Rhea" id="RHEA:21249"/>
    </physiologicalReaction>
</comment>
<comment type="cofactor">
    <cofactor evidence="2">
        <name>Mg(2+)</name>
        <dbReference type="ChEBI" id="CHEBI:18420"/>
    </cofactor>
    <text evidence="2 4">Two Mg(2+) ions are coordinated by both the catalytic residues and the nucleic acid substrate to enhance substrate recognition and catalytic efficiency.</text>
</comment>
<comment type="subunit">
    <text evidence="1 2">Component of the RNA polymerase III (Pol III) complex consisting of 17 subunits: a ten-subunit catalytic core composed of POLR3A/RPC1, POLR3B/RPC2, POLR1C/RPAC1, POLR1D/RPAC2, POLR3K/RPC10, POLR2E/RPABC1, POLR2F/RPABC2, POLR2H/RPABC3, POLR2K/RPABC4 and POLR2L/RPABC5; a mobile stalk composed of two subunits POLR3H/RPC8 and CRCP/RPC9, protruding from the core and functioning primarily in transcription initiation; and additional subunits homologous to general transcription factors of the RNA polymerase II machinery, POLR3C/RPC3-POLR3F/RPC6-POLR3G/RPC7 heterotrimer required for transcription initiation and POLR3D/RPC4-POLR3E/RPC5 heterodimer involved in both transcription initiation and termination (By similarity). As part of the RNA polymerase III complex, interacts with PKP2 (By similarity).</text>
</comment>
<comment type="subcellular location">
    <subcellularLocation>
        <location evidence="2">Nucleus</location>
    </subcellularLocation>
    <subcellularLocation>
        <location evidence="2">Cytoplasm</location>
        <location evidence="2">Cytosol</location>
    </subcellularLocation>
</comment>
<comment type="similarity">
    <text evidence="5">Belongs to the RNA polymerase beta' chain family.</text>
</comment>
<evidence type="ECO:0000250" key="1"/>
<evidence type="ECO:0000250" key="2">
    <source>
        <dbReference type="UniProtKB" id="O14802"/>
    </source>
</evidence>
<evidence type="ECO:0000250" key="3">
    <source>
        <dbReference type="UniProtKB" id="P04050"/>
    </source>
</evidence>
<evidence type="ECO:0000250" key="4">
    <source>
        <dbReference type="UniProtKB" id="P24928"/>
    </source>
</evidence>
<evidence type="ECO:0000305" key="5"/>
<reference key="1">
    <citation type="submission" date="2007-03" db="EMBL/GenBank/DDBJ databases">
        <authorList>
            <consortium name="NIH - Mammalian Gene Collection (MGC) project"/>
        </authorList>
    </citation>
    <scope>NUCLEOTIDE SEQUENCE [LARGE SCALE MRNA]</scope>
    <source>
        <strain>Hereford</strain>
        <tissue>Hypothalamus</tissue>
    </source>
</reference>
<sequence>MVKEQFRETDVAKKISHICFGMKSAEEMRQQAHIQVVSKNLYSQDNNHSPLLYGVLDHRMGTSEKDRPCETCGKNLADCLGHYGYIDLELPCFHVGYFRAVIGILQMICKTCCHIMLSQEEKKQFLDYLKRPGLTYLQKRGLKKKISDKCRKKNTCHHCGAFNGTVKKCGLLKIIHEKYKTNKKVVDPIVSSFLQSFETAIEHNKEVEPLLGKAQENLNPLVVLNLFKRIPAEDIPLLLMNPEAGKPSDLILTRLLVPPLCIRPSVVSDLKSGTNEDDLTMKLTEIIFLNDVIKKHRISGAKTQMIMEDWDFLQLQCALYINSELSGIPLNMAPKKWTRGFVQRLKGKQGRFRGNLSGKRVDFSGRTVISPDPNLRIDEVAVPVHVAKILTFPEKVNKANINFLRKLVRNGPEVHPGANFIQQRHTQMKRFLKYGNREKMAQELKFGDIVERHLIDGDVVLFNRQPSLHKLSIMAHLARVKPHRTFRFNECVCTPYNADFDGDEMNLHLPQTEEAKAEALVLMGTKANLVTPRNGEPLIAAIQDFLTGAYLLTLKDTFFDRAKACQIIASILVGKDEKIKVRLPPPTILKPVTLWTGKQIFSVILRPSDDNPVRANLRTKGKQYCGRGEDLCVNDSYVTIQNSELMSGSMDKGTLGSGSKNNIFYILLRDWGQNEAADAMSRLARLAPVYLSNRGFSIGIGDVTPGQGLLKAKYELLNAGYKKCDEYIEALNTGKLQQQPGCTAEETLEALILKELSVIRDHAGSACLRELDKSNSPLTMALCGSKGSFINISQMIACVGQQAISGSRVPDGFENRSLPHFEKHSKLPAAKGFVANSFYSGLTPTEFFFHTMAGREGLVDTAVKTAETGYMQRRLVKSLEDLCSQYDLTVRSSTGDIIQFIYGGDGLDPAAMEGKDEPLEFKRVLDNIKAVFPCRSEPALSKNELLLSAESIMKKNEFLCCQDSFLQEIKKFIKEVSEKIKKTRDKYGINDNGTTEPRVLYQLDRITPTQIEKFLETCRDKYMRAQMEPGSAVGALCAQSIGEPGTQMTLKTFHFAGVASMNITLGVPRIKEIINASKAISTPIITAQLDKDDDADYARLVKGRIEKTLLGEISEYIEEVFLPDDCFILVKLSLERIRLLRLEVNAETVRYSICMSKLRVKPGDVAVHGEAVVCVTPRENSKSSMYYVLQFLKEDLPKVVVQGIPEVSRAVIHIDEQSGKEKYKLLVEGDNLRAVMATHGVKGTRTTSNNTYEVEKTLGIEAARTTIINEIQYTMVNHGMSIDRRHVMLLSDLMTYKGEVLGITRFGLAKMKESVLMLASFEKTADHLFDAAYFGQKDSVCGVSECIIMGIPMNIGTGLFKLLHKANRDPSPPRRPLIFDTNEFHIPLVT</sequence>
<proteinExistence type="evidence at transcript level"/>
<name>RPC1_BOVIN</name>
<accession>A4IF62</accession>
<dbReference type="EC" id="2.7.7.6" evidence="2"/>
<dbReference type="EMBL" id="BC134422">
    <property type="protein sequence ID" value="AAI34423.1"/>
    <property type="molecule type" value="mRNA"/>
</dbReference>
<dbReference type="RefSeq" id="NP_001077219.1">
    <property type="nucleotide sequence ID" value="NM_001083750.1"/>
</dbReference>
<dbReference type="SMR" id="A4IF62"/>
<dbReference type="FunCoup" id="A4IF62">
    <property type="interactions" value="4327"/>
</dbReference>
<dbReference type="STRING" id="9913.ENSBTAP00000017638"/>
<dbReference type="PaxDb" id="9913-ENSBTAP00000017638"/>
<dbReference type="Ensembl" id="ENSBTAT00000017638.7">
    <property type="protein sequence ID" value="ENSBTAP00000017638.5"/>
    <property type="gene ID" value="ENSBTAG00000013259.7"/>
</dbReference>
<dbReference type="GeneID" id="540308"/>
<dbReference type="KEGG" id="bta:540308"/>
<dbReference type="CTD" id="11128"/>
<dbReference type="VEuPathDB" id="HostDB:ENSBTAG00000013259"/>
<dbReference type="VGNC" id="VGNC:33145">
    <property type="gene designation" value="POLR3A"/>
</dbReference>
<dbReference type="eggNOG" id="KOG0261">
    <property type="taxonomic scope" value="Eukaryota"/>
</dbReference>
<dbReference type="GeneTree" id="ENSGT00930000151028"/>
<dbReference type="HOGENOM" id="CLU_000487_3_0_1"/>
<dbReference type="InParanoid" id="A4IF62"/>
<dbReference type="OMA" id="AVCPPYN"/>
<dbReference type="OrthoDB" id="270392at2759"/>
<dbReference type="TreeFam" id="TF103054"/>
<dbReference type="Reactome" id="R-BTA-76061">
    <property type="pathway name" value="RNA Polymerase III Transcription Initiation From Type 1 Promoter"/>
</dbReference>
<dbReference type="Reactome" id="R-BTA-76066">
    <property type="pathway name" value="RNA Polymerase III Transcription Initiation From Type 2 Promoter"/>
</dbReference>
<dbReference type="Reactome" id="R-BTA-76071">
    <property type="pathway name" value="RNA Polymerase III Transcription Initiation From Type 3 Promoter"/>
</dbReference>
<dbReference type="Proteomes" id="UP000009136">
    <property type="component" value="Chromosome 28"/>
</dbReference>
<dbReference type="Bgee" id="ENSBTAG00000013259">
    <property type="expression patterns" value="Expressed in spermatocyte and 108 other cell types or tissues"/>
</dbReference>
<dbReference type="GO" id="GO:0005829">
    <property type="term" value="C:cytosol"/>
    <property type="evidence" value="ECO:0007669"/>
    <property type="project" value="UniProtKB-SubCell"/>
</dbReference>
<dbReference type="GO" id="GO:0005739">
    <property type="term" value="C:mitochondrion"/>
    <property type="evidence" value="ECO:0007669"/>
    <property type="project" value="GOC"/>
</dbReference>
<dbReference type="GO" id="GO:0031981">
    <property type="term" value="C:nuclear lumen"/>
    <property type="evidence" value="ECO:0007669"/>
    <property type="project" value="UniProtKB-ARBA"/>
</dbReference>
<dbReference type="GO" id="GO:0005634">
    <property type="term" value="C:nucleus"/>
    <property type="evidence" value="ECO:0000250"/>
    <property type="project" value="UniProtKB"/>
</dbReference>
<dbReference type="GO" id="GO:0005666">
    <property type="term" value="C:RNA polymerase III complex"/>
    <property type="evidence" value="ECO:0000318"/>
    <property type="project" value="GO_Central"/>
</dbReference>
<dbReference type="GO" id="GO:0003677">
    <property type="term" value="F:DNA binding"/>
    <property type="evidence" value="ECO:0007669"/>
    <property type="project" value="InterPro"/>
</dbReference>
<dbReference type="GO" id="GO:0003899">
    <property type="term" value="F:DNA-directed RNA polymerase activity"/>
    <property type="evidence" value="ECO:0007669"/>
    <property type="project" value="UniProtKB-EC"/>
</dbReference>
<dbReference type="GO" id="GO:0046872">
    <property type="term" value="F:metal ion binding"/>
    <property type="evidence" value="ECO:0007669"/>
    <property type="project" value="UniProtKB-KW"/>
</dbReference>
<dbReference type="GO" id="GO:0051607">
    <property type="term" value="P:defense response to virus"/>
    <property type="evidence" value="ECO:0007669"/>
    <property type="project" value="UniProtKB-KW"/>
</dbReference>
<dbReference type="GO" id="GO:0006351">
    <property type="term" value="P:DNA-templated transcription"/>
    <property type="evidence" value="ECO:0007669"/>
    <property type="project" value="InterPro"/>
</dbReference>
<dbReference type="GO" id="GO:0045087">
    <property type="term" value="P:innate immune response"/>
    <property type="evidence" value="ECO:0000250"/>
    <property type="project" value="UniProtKB"/>
</dbReference>
<dbReference type="GO" id="GO:0032728">
    <property type="term" value="P:positive regulation of interferon-beta production"/>
    <property type="evidence" value="ECO:0000250"/>
    <property type="project" value="UniProtKB"/>
</dbReference>
<dbReference type="CDD" id="cd02736">
    <property type="entry name" value="RNAP_III_Rpc1_C"/>
    <property type="match status" value="1"/>
</dbReference>
<dbReference type="CDD" id="cd02583">
    <property type="entry name" value="RNAP_III_RPC1_N"/>
    <property type="match status" value="1"/>
</dbReference>
<dbReference type="FunFam" id="2.40.40.20:FF:000019">
    <property type="entry name" value="DNA-directed RNA polymerase II subunit RPB1"/>
    <property type="match status" value="1"/>
</dbReference>
<dbReference type="FunFam" id="1.10.132.30:FF:000001">
    <property type="entry name" value="DNA-directed RNA polymerase subunit"/>
    <property type="match status" value="1"/>
</dbReference>
<dbReference type="FunFam" id="1.10.150.390:FF:000003">
    <property type="entry name" value="DNA-directed RNA polymerase subunit"/>
    <property type="match status" value="1"/>
</dbReference>
<dbReference type="FunFam" id="1.10.274.100:FF:000003">
    <property type="entry name" value="DNA-directed RNA polymerase subunit"/>
    <property type="match status" value="1"/>
</dbReference>
<dbReference type="FunFam" id="3.30.1490.180:FF:000002">
    <property type="entry name" value="DNA-directed RNA polymerase subunit"/>
    <property type="match status" value="1"/>
</dbReference>
<dbReference type="FunFam" id="4.10.860.120:FF:000004">
    <property type="entry name" value="DNA-directed RNA polymerase subunit"/>
    <property type="match status" value="1"/>
</dbReference>
<dbReference type="Gene3D" id="1.10.132.30">
    <property type="match status" value="1"/>
</dbReference>
<dbReference type="Gene3D" id="1.10.150.390">
    <property type="match status" value="1"/>
</dbReference>
<dbReference type="Gene3D" id="2.40.40.20">
    <property type="match status" value="1"/>
</dbReference>
<dbReference type="Gene3D" id="6.10.250.2940">
    <property type="match status" value="1"/>
</dbReference>
<dbReference type="Gene3D" id="6.20.50.80">
    <property type="match status" value="1"/>
</dbReference>
<dbReference type="Gene3D" id="3.30.1490.180">
    <property type="entry name" value="RNA polymerase ii"/>
    <property type="match status" value="1"/>
</dbReference>
<dbReference type="Gene3D" id="4.10.860.120">
    <property type="entry name" value="RNA polymerase II, clamp domain"/>
    <property type="match status" value="1"/>
</dbReference>
<dbReference type="Gene3D" id="1.10.274.100">
    <property type="entry name" value="RNA polymerase Rpb1, domain 3"/>
    <property type="match status" value="1"/>
</dbReference>
<dbReference type="InterPro" id="IPR000722">
    <property type="entry name" value="RNA_pol_asu"/>
</dbReference>
<dbReference type="InterPro" id="IPR006592">
    <property type="entry name" value="RNA_pol_N"/>
</dbReference>
<dbReference type="InterPro" id="IPR007080">
    <property type="entry name" value="RNA_pol_Rpb1_1"/>
</dbReference>
<dbReference type="InterPro" id="IPR007066">
    <property type="entry name" value="RNA_pol_Rpb1_3"/>
</dbReference>
<dbReference type="InterPro" id="IPR042102">
    <property type="entry name" value="RNA_pol_Rpb1_3_sf"/>
</dbReference>
<dbReference type="InterPro" id="IPR007083">
    <property type="entry name" value="RNA_pol_Rpb1_4"/>
</dbReference>
<dbReference type="InterPro" id="IPR007081">
    <property type="entry name" value="RNA_pol_Rpb1_5"/>
</dbReference>
<dbReference type="InterPro" id="IPR044893">
    <property type="entry name" value="RNA_pol_Rpb1_clamp_domain"/>
</dbReference>
<dbReference type="InterPro" id="IPR035698">
    <property type="entry name" value="RNAP_III_Rpc1_C"/>
</dbReference>
<dbReference type="InterPro" id="IPR035697">
    <property type="entry name" value="RNAP_III_RPC1_N"/>
</dbReference>
<dbReference type="InterPro" id="IPR038120">
    <property type="entry name" value="Rpb1_funnel_sf"/>
</dbReference>
<dbReference type="InterPro" id="IPR015700">
    <property type="entry name" value="RPC1"/>
</dbReference>
<dbReference type="NCBIfam" id="NF006336">
    <property type="entry name" value="PRK08566.1"/>
    <property type="match status" value="1"/>
</dbReference>
<dbReference type="PANTHER" id="PTHR48446">
    <property type="entry name" value="DNA-DIRECTED RNA POLYMERASE SUBUNIT BETA' N-TERMINAL SECTION"/>
    <property type="match status" value="1"/>
</dbReference>
<dbReference type="PANTHER" id="PTHR48446:SF1">
    <property type="entry name" value="DNA-DIRECTED RNA POLYMERASE SUBUNIT BETA' N-TERMINAL SECTION"/>
    <property type="match status" value="1"/>
</dbReference>
<dbReference type="Pfam" id="PF04997">
    <property type="entry name" value="RNA_pol_Rpb1_1"/>
    <property type="match status" value="1"/>
</dbReference>
<dbReference type="Pfam" id="PF00623">
    <property type="entry name" value="RNA_pol_Rpb1_2"/>
    <property type="match status" value="1"/>
</dbReference>
<dbReference type="Pfam" id="PF04983">
    <property type="entry name" value="RNA_pol_Rpb1_3"/>
    <property type="match status" value="1"/>
</dbReference>
<dbReference type="Pfam" id="PF05000">
    <property type="entry name" value="RNA_pol_Rpb1_4"/>
    <property type="match status" value="1"/>
</dbReference>
<dbReference type="Pfam" id="PF04998">
    <property type="entry name" value="RNA_pol_Rpb1_5"/>
    <property type="match status" value="1"/>
</dbReference>
<dbReference type="SMART" id="SM00663">
    <property type="entry name" value="RPOLA_N"/>
    <property type="match status" value="1"/>
</dbReference>
<dbReference type="SUPFAM" id="SSF64484">
    <property type="entry name" value="beta and beta-prime subunits of DNA dependent RNA-polymerase"/>
    <property type="match status" value="1"/>
</dbReference>
<protein>
    <recommendedName>
        <fullName>DNA-directed RNA polymerase III subunit RPC1</fullName>
        <shortName>RNA polymerase III subunit C1</shortName>
        <ecNumber evidence="2">2.7.7.6</ecNumber>
    </recommendedName>
    <alternativeName>
        <fullName>DNA-directed RNA polymerase III subunit A</fullName>
    </alternativeName>
</protein>
<gene>
    <name evidence="2" type="primary">POLR3A</name>
</gene>